<protein>
    <recommendedName>
        <fullName evidence="1">Large ribosomal subunit protein bL21</fullName>
    </recommendedName>
    <alternativeName>
        <fullName evidence="2">50S ribosomal protein L21</fullName>
    </alternativeName>
</protein>
<feature type="chain" id="PRO_0000269301" description="Large ribosomal subunit protein bL21">
    <location>
        <begin position="1"/>
        <end position="103"/>
    </location>
</feature>
<name>RL21_CHRSD</name>
<sequence>MYAVIKSGGKQYRVQEGQTLKLEKLEVATGETLELDQVLLVADDDDVKVGAPLVEGAKVTAEVVSHGRGEKVKIIKFRRRKHQMRRQGHRQWFTEVKITGISA</sequence>
<dbReference type="EMBL" id="CP000285">
    <property type="protein sequence ID" value="ABE57836.1"/>
    <property type="molecule type" value="Genomic_DNA"/>
</dbReference>
<dbReference type="RefSeq" id="WP_011505782.1">
    <property type="nucleotide sequence ID" value="NC_007963.1"/>
</dbReference>
<dbReference type="SMR" id="Q1R0C2"/>
<dbReference type="STRING" id="290398.Csal_0474"/>
<dbReference type="GeneID" id="95333227"/>
<dbReference type="KEGG" id="csa:Csal_0474"/>
<dbReference type="eggNOG" id="COG0261">
    <property type="taxonomic scope" value="Bacteria"/>
</dbReference>
<dbReference type="HOGENOM" id="CLU_061463_3_2_6"/>
<dbReference type="OrthoDB" id="9813334at2"/>
<dbReference type="Proteomes" id="UP000000239">
    <property type="component" value="Chromosome"/>
</dbReference>
<dbReference type="GO" id="GO:0005737">
    <property type="term" value="C:cytoplasm"/>
    <property type="evidence" value="ECO:0007669"/>
    <property type="project" value="UniProtKB-ARBA"/>
</dbReference>
<dbReference type="GO" id="GO:1990904">
    <property type="term" value="C:ribonucleoprotein complex"/>
    <property type="evidence" value="ECO:0007669"/>
    <property type="project" value="UniProtKB-KW"/>
</dbReference>
<dbReference type="GO" id="GO:0005840">
    <property type="term" value="C:ribosome"/>
    <property type="evidence" value="ECO:0007669"/>
    <property type="project" value="UniProtKB-KW"/>
</dbReference>
<dbReference type="GO" id="GO:0019843">
    <property type="term" value="F:rRNA binding"/>
    <property type="evidence" value="ECO:0007669"/>
    <property type="project" value="UniProtKB-UniRule"/>
</dbReference>
<dbReference type="GO" id="GO:0003735">
    <property type="term" value="F:structural constituent of ribosome"/>
    <property type="evidence" value="ECO:0007669"/>
    <property type="project" value="InterPro"/>
</dbReference>
<dbReference type="GO" id="GO:0006412">
    <property type="term" value="P:translation"/>
    <property type="evidence" value="ECO:0007669"/>
    <property type="project" value="UniProtKB-UniRule"/>
</dbReference>
<dbReference type="HAMAP" id="MF_01363">
    <property type="entry name" value="Ribosomal_bL21"/>
    <property type="match status" value="1"/>
</dbReference>
<dbReference type="InterPro" id="IPR028909">
    <property type="entry name" value="bL21-like"/>
</dbReference>
<dbReference type="InterPro" id="IPR036164">
    <property type="entry name" value="bL21-like_sf"/>
</dbReference>
<dbReference type="InterPro" id="IPR001787">
    <property type="entry name" value="Ribosomal_bL21"/>
</dbReference>
<dbReference type="InterPro" id="IPR018258">
    <property type="entry name" value="Ribosomal_bL21_CS"/>
</dbReference>
<dbReference type="NCBIfam" id="TIGR00061">
    <property type="entry name" value="L21"/>
    <property type="match status" value="1"/>
</dbReference>
<dbReference type="PANTHER" id="PTHR21349">
    <property type="entry name" value="50S RIBOSOMAL PROTEIN L21"/>
    <property type="match status" value="1"/>
</dbReference>
<dbReference type="PANTHER" id="PTHR21349:SF0">
    <property type="entry name" value="LARGE RIBOSOMAL SUBUNIT PROTEIN BL21M"/>
    <property type="match status" value="1"/>
</dbReference>
<dbReference type="Pfam" id="PF00829">
    <property type="entry name" value="Ribosomal_L21p"/>
    <property type="match status" value="1"/>
</dbReference>
<dbReference type="SUPFAM" id="SSF141091">
    <property type="entry name" value="L21p-like"/>
    <property type="match status" value="1"/>
</dbReference>
<dbReference type="PROSITE" id="PS01169">
    <property type="entry name" value="RIBOSOMAL_L21"/>
    <property type="match status" value="1"/>
</dbReference>
<accession>Q1R0C2</accession>
<comment type="function">
    <text evidence="1">This protein binds to 23S rRNA in the presence of protein L20.</text>
</comment>
<comment type="subunit">
    <text evidence="1">Part of the 50S ribosomal subunit. Contacts protein L20.</text>
</comment>
<comment type="similarity">
    <text evidence="1">Belongs to the bacterial ribosomal protein bL21 family.</text>
</comment>
<evidence type="ECO:0000255" key="1">
    <source>
        <dbReference type="HAMAP-Rule" id="MF_01363"/>
    </source>
</evidence>
<evidence type="ECO:0000305" key="2"/>
<keyword id="KW-1185">Reference proteome</keyword>
<keyword id="KW-0687">Ribonucleoprotein</keyword>
<keyword id="KW-0689">Ribosomal protein</keyword>
<keyword id="KW-0694">RNA-binding</keyword>
<keyword id="KW-0699">rRNA-binding</keyword>
<gene>
    <name evidence="1" type="primary">rplU</name>
    <name type="ordered locus">Csal_0474</name>
</gene>
<reference key="1">
    <citation type="journal article" date="2011" name="Stand. Genomic Sci.">
        <title>Complete genome sequence of the halophilic and highly halotolerant Chromohalobacter salexigens type strain (1H11(T)).</title>
        <authorList>
            <person name="Copeland A."/>
            <person name="O'Connor K."/>
            <person name="Lucas S."/>
            <person name="Lapidus A."/>
            <person name="Berry K.W."/>
            <person name="Detter J.C."/>
            <person name="Del Rio T.G."/>
            <person name="Hammon N."/>
            <person name="Dalin E."/>
            <person name="Tice H."/>
            <person name="Pitluck S."/>
            <person name="Bruce D."/>
            <person name="Goodwin L."/>
            <person name="Han C."/>
            <person name="Tapia R."/>
            <person name="Saunders E."/>
            <person name="Schmutz J."/>
            <person name="Brettin T."/>
            <person name="Larimer F."/>
            <person name="Land M."/>
            <person name="Hauser L."/>
            <person name="Vargas C."/>
            <person name="Nieto J.J."/>
            <person name="Kyrpides N.C."/>
            <person name="Ivanova N."/>
            <person name="Goker M."/>
            <person name="Klenk H.P."/>
            <person name="Csonka L.N."/>
            <person name="Woyke T."/>
        </authorList>
    </citation>
    <scope>NUCLEOTIDE SEQUENCE [LARGE SCALE GENOMIC DNA]</scope>
    <source>
        <strain>ATCC BAA-138 / DSM 3043 / CIP 106854 / NCIMB 13768 / 1H11</strain>
    </source>
</reference>
<proteinExistence type="inferred from homology"/>
<organism>
    <name type="scientific">Chromohalobacter salexigens (strain ATCC BAA-138 / DSM 3043 / CIP 106854 / NCIMB 13768 / 1H11)</name>
    <dbReference type="NCBI Taxonomy" id="290398"/>
    <lineage>
        <taxon>Bacteria</taxon>
        <taxon>Pseudomonadati</taxon>
        <taxon>Pseudomonadota</taxon>
        <taxon>Gammaproteobacteria</taxon>
        <taxon>Oceanospirillales</taxon>
        <taxon>Halomonadaceae</taxon>
        <taxon>Chromohalobacter</taxon>
    </lineage>
</organism>